<protein>
    <recommendedName>
        <fullName>Coiled-coil domain-containing protein 124-B</fullName>
    </recommendedName>
</protein>
<sequence>MPKKFQSENTKSAAARARKAEAKAVADAKRKKETEDAFWQDDDKHVVRKEHRKEEKEKKRLELLERKKESQRLLDEEDSKMKGKPTKPAAPSKVTRAQIEETLCKEEKHKDAPEKPKTHLEIPLEENVNRRVLEEGEVEARTVEDAIAALSIGKELDRHPERRMKAAFTAFEEINMPLLKQENPNMRLSQLKQLLKKEWMKSPENPMNQKYATYNSH</sequence>
<proteinExistence type="evidence at transcript level"/>
<dbReference type="EMBL" id="BC077812">
    <property type="protein sequence ID" value="AAH77812.1"/>
    <property type="molecule type" value="mRNA"/>
</dbReference>
<dbReference type="RefSeq" id="NP_001086949.1">
    <property type="nucleotide sequence ID" value="NM_001093480.1"/>
</dbReference>
<dbReference type="RefSeq" id="XP_018095323.1">
    <property type="nucleotide sequence ID" value="XM_018239834.1"/>
</dbReference>
<dbReference type="SMR" id="Q6DD17"/>
<dbReference type="DNASU" id="446784"/>
<dbReference type="GeneID" id="446784"/>
<dbReference type="KEGG" id="xla:446784"/>
<dbReference type="AGR" id="Xenbase:XB-GENE-6255345"/>
<dbReference type="CTD" id="446784"/>
<dbReference type="Xenbase" id="XB-GENE-6255345">
    <property type="gene designation" value="ccdc124.S"/>
</dbReference>
<dbReference type="OrthoDB" id="76412at2759"/>
<dbReference type="Proteomes" id="UP000186698">
    <property type="component" value="Chromosome 1S"/>
</dbReference>
<dbReference type="Bgee" id="446784">
    <property type="expression patterns" value="Expressed in muscle tissue and 19 other cell types or tissues"/>
</dbReference>
<dbReference type="GO" id="GO:0005813">
    <property type="term" value="C:centrosome"/>
    <property type="evidence" value="ECO:0007669"/>
    <property type="project" value="UniProtKB-SubCell"/>
</dbReference>
<dbReference type="GO" id="GO:0005737">
    <property type="term" value="C:cytoplasm"/>
    <property type="evidence" value="ECO:0007669"/>
    <property type="project" value="UniProtKB-KW"/>
</dbReference>
<dbReference type="GO" id="GO:0030496">
    <property type="term" value="C:midbody"/>
    <property type="evidence" value="ECO:0007669"/>
    <property type="project" value="UniProtKB-SubCell"/>
</dbReference>
<dbReference type="GO" id="GO:0005634">
    <property type="term" value="C:nucleus"/>
    <property type="evidence" value="ECO:0000318"/>
    <property type="project" value="GO_Central"/>
</dbReference>
<dbReference type="GO" id="GO:0003713">
    <property type="term" value="F:transcription coactivator activity"/>
    <property type="evidence" value="ECO:0000318"/>
    <property type="project" value="GO_Central"/>
</dbReference>
<dbReference type="GO" id="GO:0006366">
    <property type="term" value="P:transcription by RNA polymerase II"/>
    <property type="evidence" value="ECO:0000318"/>
    <property type="project" value="GO_Central"/>
</dbReference>
<dbReference type="InterPro" id="IPR010422">
    <property type="entry name" value="Ccdc124/Oxs1"/>
</dbReference>
<dbReference type="InterPro" id="IPR054414">
    <property type="entry name" value="Ccdc124/Oxs1_C"/>
</dbReference>
<dbReference type="PANTHER" id="PTHR21680">
    <property type="entry name" value="COILED-COIL DOMAIN-CONTAINING PROTEIN 124"/>
    <property type="match status" value="1"/>
</dbReference>
<dbReference type="PANTHER" id="PTHR21680:SF0">
    <property type="entry name" value="COILED-COIL DOMAIN-CONTAINING PROTEIN 124"/>
    <property type="match status" value="1"/>
</dbReference>
<dbReference type="Pfam" id="PF06244">
    <property type="entry name" value="Ccdc124"/>
    <property type="match status" value="1"/>
</dbReference>
<reference key="1">
    <citation type="submission" date="2004-07" db="EMBL/GenBank/DDBJ databases">
        <authorList>
            <consortium name="NIH - Xenopus Gene Collection (XGC) project"/>
        </authorList>
    </citation>
    <scope>NUCLEOTIDE SEQUENCE [LARGE SCALE MRNA]</scope>
    <source>
        <tissue>Embryo</tissue>
    </source>
</reference>
<accession>Q6DD17</accession>
<name>C124B_XENLA</name>
<gene>
    <name type="primary">ccdc124-b</name>
</gene>
<keyword id="KW-0175">Coiled coil</keyword>
<keyword id="KW-0963">Cytoplasm</keyword>
<keyword id="KW-0206">Cytoskeleton</keyword>
<keyword id="KW-1185">Reference proteome</keyword>
<comment type="function">
    <text evidence="1">Ribosome-binding protein involved in ribosome hibernation: associates with translationally inactive ribosomes and stabilizes the nonrotated conformation of the 80S ribosome, thereby promoting ribosome preservation and storage.</text>
</comment>
<comment type="subunit">
    <text evidence="1">Associates with translationally inactive ribosomes in the nonrotated state.</text>
</comment>
<comment type="subcellular location">
    <subcellularLocation>
        <location evidence="1">Cytoplasm</location>
        <location evidence="1">Cytoskeleton</location>
        <location evidence="1">Microtubule organizing center</location>
        <location evidence="1">Centrosome</location>
    </subcellularLocation>
    <subcellularLocation>
        <location evidence="1">Midbody</location>
    </subcellularLocation>
    <text evidence="1">Colocalizes with gamma-tubulin at interphase, prophase, metaphase, and anaphase. Relocates from centrosome to midbody at telophase.</text>
</comment>
<comment type="similarity">
    <text evidence="4">Belongs to the CCDC124 family.</text>
</comment>
<evidence type="ECO:0000250" key="1">
    <source>
        <dbReference type="UniProtKB" id="Q96CT7"/>
    </source>
</evidence>
<evidence type="ECO:0000255" key="2"/>
<evidence type="ECO:0000256" key="3">
    <source>
        <dbReference type="SAM" id="MobiDB-lite"/>
    </source>
</evidence>
<evidence type="ECO:0000305" key="4"/>
<feature type="chain" id="PRO_0000263740" description="Coiled-coil domain-containing protein 124-B">
    <location>
        <begin position="1"/>
        <end position="217"/>
    </location>
</feature>
<feature type="region of interest" description="Disordered" evidence="3">
    <location>
        <begin position="1"/>
        <end position="123"/>
    </location>
</feature>
<feature type="coiled-coil region" evidence="2">
    <location>
        <begin position="41"/>
        <end position="83"/>
    </location>
</feature>
<feature type="compositionally biased region" description="Basic and acidic residues" evidence="3">
    <location>
        <begin position="18"/>
        <end position="45"/>
    </location>
</feature>
<feature type="compositionally biased region" description="Basic and acidic residues" evidence="3">
    <location>
        <begin position="52"/>
        <end position="74"/>
    </location>
</feature>
<feature type="compositionally biased region" description="Basic and acidic residues" evidence="3">
    <location>
        <begin position="98"/>
        <end position="123"/>
    </location>
</feature>
<organism>
    <name type="scientific">Xenopus laevis</name>
    <name type="common">African clawed frog</name>
    <dbReference type="NCBI Taxonomy" id="8355"/>
    <lineage>
        <taxon>Eukaryota</taxon>
        <taxon>Metazoa</taxon>
        <taxon>Chordata</taxon>
        <taxon>Craniata</taxon>
        <taxon>Vertebrata</taxon>
        <taxon>Euteleostomi</taxon>
        <taxon>Amphibia</taxon>
        <taxon>Batrachia</taxon>
        <taxon>Anura</taxon>
        <taxon>Pipoidea</taxon>
        <taxon>Pipidae</taxon>
        <taxon>Xenopodinae</taxon>
        <taxon>Xenopus</taxon>
        <taxon>Xenopus</taxon>
    </lineage>
</organism>